<comment type="function">
    <text evidence="1">Catalyzes the stereoinversion of LL-2,6-diaminopimelate (L,L-DAP) to meso-diaminopimelate (meso-DAP), a precursor of L-lysine and an essential component of the bacterial peptidoglycan.</text>
</comment>
<comment type="catalytic activity">
    <reaction evidence="1">
        <text>(2S,6S)-2,6-diaminopimelate = meso-2,6-diaminopimelate</text>
        <dbReference type="Rhea" id="RHEA:15393"/>
        <dbReference type="ChEBI" id="CHEBI:57609"/>
        <dbReference type="ChEBI" id="CHEBI:57791"/>
        <dbReference type="EC" id="5.1.1.7"/>
    </reaction>
</comment>
<comment type="pathway">
    <text evidence="1">Amino-acid biosynthesis; L-lysine biosynthesis via DAP pathway; DL-2,6-diaminopimelate from LL-2,6-diaminopimelate: step 1/1.</text>
</comment>
<comment type="subunit">
    <text evidence="1">Homodimer.</text>
</comment>
<comment type="subcellular location">
    <subcellularLocation>
        <location evidence="1">Cytoplasm</location>
    </subcellularLocation>
</comment>
<comment type="similarity">
    <text evidence="1">Belongs to the diaminopimelate epimerase family.</text>
</comment>
<organism>
    <name type="scientific">Methylocella silvestris (strain DSM 15510 / CIP 108128 / LMG 27833 / NCIMB 13906 / BL2)</name>
    <dbReference type="NCBI Taxonomy" id="395965"/>
    <lineage>
        <taxon>Bacteria</taxon>
        <taxon>Pseudomonadati</taxon>
        <taxon>Pseudomonadota</taxon>
        <taxon>Alphaproteobacteria</taxon>
        <taxon>Hyphomicrobiales</taxon>
        <taxon>Beijerinckiaceae</taxon>
        <taxon>Methylocella</taxon>
    </lineage>
</organism>
<proteinExistence type="inferred from homology"/>
<feature type="chain" id="PRO_1000124426" description="Diaminopimelate epimerase">
    <location>
        <begin position="1"/>
        <end position="290"/>
    </location>
</feature>
<feature type="active site" description="Proton donor" evidence="1">
    <location>
        <position position="78"/>
    </location>
</feature>
<feature type="active site" description="Proton acceptor" evidence="1">
    <location>
        <position position="225"/>
    </location>
</feature>
<feature type="binding site" evidence="1">
    <location>
        <position position="17"/>
    </location>
    <ligand>
        <name>substrate</name>
    </ligand>
</feature>
<feature type="binding site" evidence="1">
    <location>
        <position position="49"/>
    </location>
    <ligand>
        <name>substrate</name>
    </ligand>
</feature>
<feature type="binding site" evidence="1">
    <location>
        <position position="69"/>
    </location>
    <ligand>
        <name>substrate</name>
    </ligand>
</feature>
<feature type="binding site" evidence="1">
    <location>
        <begin position="79"/>
        <end position="80"/>
    </location>
    <ligand>
        <name>substrate</name>
    </ligand>
</feature>
<feature type="binding site" evidence="1">
    <location>
        <position position="165"/>
    </location>
    <ligand>
        <name>substrate</name>
    </ligand>
</feature>
<feature type="binding site" evidence="1">
    <location>
        <position position="198"/>
    </location>
    <ligand>
        <name>substrate</name>
    </ligand>
</feature>
<feature type="binding site" evidence="1">
    <location>
        <begin position="216"/>
        <end position="217"/>
    </location>
    <ligand>
        <name>substrate</name>
    </ligand>
</feature>
<feature type="binding site" evidence="1">
    <location>
        <begin position="226"/>
        <end position="227"/>
    </location>
    <ligand>
        <name>substrate</name>
    </ligand>
</feature>
<feature type="site" description="Could be important to modulate the pK values of the two catalytic cysteine residues" evidence="1">
    <location>
        <position position="167"/>
    </location>
</feature>
<feature type="site" description="Could be important to modulate the pK values of the two catalytic cysteine residues" evidence="1">
    <location>
        <position position="216"/>
    </location>
</feature>
<accession>B8EM14</accession>
<reference key="1">
    <citation type="journal article" date="2010" name="J. Bacteriol.">
        <title>Complete genome sequence of the aerobic facultative methanotroph Methylocella silvestris BL2.</title>
        <authorList>
            <person name="Chen Y."/>
            <person name="Crombie A."/>
            <person name="Rahman M.T."/>
            <person name="Dedysh S.N."/>
            <person name="Liesack W."/>
            <person name="Stott M.B."/>
            <person name="Alam M."/>
            <person name="Theisen A.R."/>
            <person name="Murrell J.C."/>
            <person name="Dunfield P.F."/>
        </authorList>
    </citation>
    <scope>NUCLEOTIDE SEQUENCE [LARGE SCALE GENOMIC DNA]</scope>
    <source>
        <strain>DSM 15510 / CIP 108128 / LMG 27833 / NCIMB 13906 / BL2</strain>
    </source>
</reference>
<protein>
    <recommendedName>
        <fullName evidence="1">Diaminopimelate epimerase</fullName>
        <shortName evidence="1">DAP epimerase</shortName>
        <ecNumber evidence="1">5.1.1.7</ecNumber>
    </recommendedName>
    <alternativeName>
        <fullName evidence="1">PLP-independent amino acid racemase</fullName>
    </alternativeName>
</protein>
<dbReference type="EC" id="5.1.1.7" evidence="1"/>
<dbReference type="EMBL" id="CP001280">
    <property type="protein sequence ID" value="ACK50795.1"/>
    <property type="molecule type" value="Genomic_DNA"/>
</dbReference>
<dbReference type="RefSeq" id="WP_012590865.1">
    <property type="nucleotide sequence ID" value="NC_011666.1"/>
</dbReference>
<dbReference type="SMR" id="B8EM14"/>
<dbReference type="STRING" id="395965.Msil_1850"/>
<dbReference type="KEGG" id="msl:Msil_1850"/>
<dbReference type="eggNOG" id="COG0253">
    <property type="taxonomic scope" value="Bacteria"/>
</dbReference>
<dbReference type="HOGENOM" id="CLU_053306_1_0_5"/>
<dbReference type="OrthoDB" id="9805408at2"/>
<dbReference type="UniPathway" id="UPA00034">
    <property type="reaction ID" value="UER00025"/>
</dbReference>
<dbReference type="Proteomes" id="UP000002257">
    <property type="component" value="Chromosome"/>
</dbReference>
<dbReference type="GO" id="GO:0005829">
    <property type="term" value="C:cytosol"/>
    <property type="evidence" value="ECO:0007669"/>
    <property type="project" value="TreeGrafter"/>
</dbReference>
<dbReference type="GO" id="GO:0008837">
    <property type="term" value="F:diaminopimelate epimerase activity"/>
    <property type="evidence" value="ECO:0007669"/>
    <property type="project" value="UniProtKB-UniRule"/>
</dbReference>
<dbReference type="GO" id="GO:0009089">
    <property type="term" value="P:lysine biosynthetic process via diaminopimelate"/>
    <property type="evidence" value="ECO:0007669"/>
    <property type="project" value="UniProtKB-UniRule"/>
</dbReference>
<dbReference type="Gene3D" id="3.10.310.10">
    <property type="entry name" value="Diaminopimelate Epimerase, Chain A, domain 1"/>
    <property type="match status" value="2"/>
</dbReference>
<dbReference type="HAMAP" id="MF_00197">
    <property type="entry name" value="DAP_epimerase"/>
    <property type="match status" value="1"/>
</dbReference>
<dbReference type="InterPro" id="IPR018510">
    <property type="entry name" value="DAP_epimerase_AS"/>
</dbReference>
<dbReference type="InterPro" id="IPR001653">
    <property type="entry name" value="DAP_epimerase_DapF"/>
</dbReference>
<dbReference type="NCBIfam" id="TIGR00652">
    <property type="entry name" value="DapF"/>
    <property type="match status" value="1"/>
</dbReference>
<dbReference type="PANTHER" id="PTHR31689:SF0">
    <property type="entry name" value="DIAMINOPIMELATE EPIMERASE"/>
    <property type="match status" value="1"/>
</dbReference>
<dbReference type="PANTHER" id="PTHR31689">
    <property type="entry name" value="DIAMINOPIMELATE EPIMERASE, CHLOROPLASTIC"/>
    <property type="match status" value="1"/>
</dbReference>
<dbReference type="Pfam" id="PF01678">
    <property type="entry name" value="DAP_epimerase"/>
    <property type="match status" value="2"/>
</dbReference>
<dbReference type="SUPFAM" id="SSF54506">
    <property type="entry name" value="Diaminopimelate epimerase-like"/>
    <property type="match status" value="2"/>
</dbReference>
<dbReference type="PROSITE" id="PS01326">
    <property type="entry name" value="DAP_EPIMERASE"/>
    <property type="match status" value="1"/>
</dbReference>
<gene>
    <name evidence="1" type="primary">dapF</name>
    <name type="ordered locus">Msil_1850</name>
</gene>
<name>DAPF_METSB</name>
<keyword id="KW-0028">Amino-acid biosynthesis</keyword>
<keyword id="KW-0963">Cytoplasm</keyword>
<keyword id="KW-0413">Isomerase</keyword>
<keyword id="KW-0457">Lysine biosynthesis</keyword>
<keyword id="KW-1185">Reference proteome</keyword>
<evidence type="ECO:0000255" key="1">
    <source>
        <dbReference type="HAMAP-Rule" id="MF_00197"/>
    </source>
</evidence>
<sequence length="290" mass="30607">MNPLANRLAVKMNGIGNEILIVDLRGAGAGVTGPQARAIARTKGLAFDQLMVLEDPRSKGCAAFVTIFNADGSQSAACGNGTRCVAWTLLKDGARDEVLLETAAGRLACRRVSELVFSVEMGRPRLKAAEIPLSRDAPDTSAVDLSFGPADSPILKNPAVVNMGNPHAIFFVEDIGAYDLAAIGPVLEHDPLFPERANISLARIVSPERIELKVWERGVGLTLACGSAACAALVAAARRGLTGRRATVALPGGELDIFWRESDDMVVMTGPVAFEFETRLDPAIFADAAA</sequence>